<feature type="chain" id="PRO_0000454459" description="Cytochrome P450 monooxygenase efuH">
    <location>
        <begin position="1"/>
        <end position="565"/>
    </location>
</feature>
<feature type="transmembrane region" description="Helical" evidence="2">
    <location>
        <begin position="3"/>
        <end position="23"/>
    </location>
</feature>
<feature type="binding site" description="axial binding residue" evidence="1">
    <location>
        <position position="472"/>
    </location>
    <ligand>
        <name>heme</name>
        <dbReference type="ChEBI" id="CHEBI:30413"/>
    </ligand>
    <ligandPart>
        <name>Fe</name>
        <dbReference type="ChEBI" id="CHEBI:18248"/>
    </ligandPart>
</feature>
<proteinExistence type="inferred from homology"/>
<gene>
    <name evidence="4" type="primary">efuH</name>
</gene>
<accession>A0A2Z4HPZ0</accession>
<reference key="1">
    <citation type="journal article" date="2018" name="Environ. Microbiol.">
        <title>Enfumafungin synthase represents a novel lineage of fungal triterpene cyclases.</title>
        <authorList>
            <person name="Kuhnert E."/>
            <person name="Li Y."/>
            <person name="Lan N."/>
            <person name="Yue Q."/>
            <person name="Chen L."/>
            <person name="Cox R.J."/>
            <person name="An Z."/>
            <person name="Yokoyama K."/>
            <person name="Bills G.F."/>
        </authorList>
    </citation>
    <scope>NUCLEOTIDE SEQUENCE [GENOMIC DNA]</scope>
    <scope>FUNCTION</scope>
    <scope>PATHWAY</scope>
</reference>
<protein>
    <recommendedName>
        <fullName evidence="4">Cytochrome P450 monooxygenase efuH</fullName>
        <ecNumber evidence="6">1.-.-.-</ecNumber>
    </recommendedName>
    <alternativeName>
        <fullName evidence="4">Enfumafungin biosynthesis cluster protein H</fullName>
    </alternativeName>
</protein>
<name>EFUH_HORCR</name>
<dbReference type="EC" id="1.-.-.-" evidence="6"/>
<dbReference type="EMBL" id="MF611890">
    <property type="protein sequence ID" value="AWW17218.1"/>
    <property type="molecule type" value="Genomic_DNA"/>
</dbReference>
<dbReference type="SMR" id="A0A2Z4HPZ0"/>
<dbReference type="UniPathway" id="UPA00213"/>
<dbReference type="GO" id="GO:0016020">
    <property type="term" value="C:membrane"/>
    <property type="evidence" value="ECO:0007669"/>
    <property type="project" value="UniProtKB-SubCell"/>
</dbReference>
<dbReference type="GO" id="GO:0020037">
    <property type="term" value="F:heme binding"/>
    <property type="evidence" value="ECO:0007669"/>
    <property type="project" value="InterPro"/>
</dbReference>
<dbReference type="GO" id="GO:0005506">
    <property type="term" value="F:iron ion binding"/>
    <property type="evidence" value="ECO:0007669"/>
    <property type="project" value="InterPro"/>
</dbReference>
<dbReference type="GO" id="GO:0004497">
    <property type="term" value="F:monooxygenase activity"/>
    <property type="evidence" value="ECO:0007669"/>
    <property type="project" value="UniProtKB-KW"/>
</dbReference>
<dbReference type="GO" id="GO:0016705">
    <property type="term" value="F:oxidoreductase activity, acting on paired donors, with incorporation or reduction of molecular oxygen"/>
    <property type="evidence" value="ECO:0007669"/>
    <property type="project" value="InterPro"/>
</dbReference>
<dbReference type="GO" id="GO:0019748">
    <property type="term" value="P:secondary metabolic process"/>
    <property type="evidence" value="ECO:0007669"/>
    <property type="project" value="UniProtKB-ARBA"/>
</dbReference>
<dbReference type="GO" id="GO:0016114">
    <property type="term" value="P:terpenoid biosynthetic process"/>
    <property type="evidence" value="ECO:0007669"/>
    <property type="project" value="UniProtKB-UniPathway"/>
</dbReference>
<dbReference type="CDD" id="cd11041">
    <property type="entry name" value="CYP503A1-like"/>
    <property type="match status" value="1"/>
</dbReference>
<dbReference type="Gene3D" id="1.10.630.10">
    <property type="entry name" value="Cytochrome P450"/>
    <property type="match status" value="1"/>
</dbReference>
<dbReference type="InterPro" id="IPR001128">
    <property type="entry name" value="Cyt_P450"/>
</dbReference>
<dbReference type="InterPro" id="IPR017972">
    <property type="entry name" value="Cyt_P450_CS"/>
</dbReference>
<dbReference type="InterPro" id="IPR002403">
    <property type="entry name" value="Cyt_P450_E_grp-IV"/>
</dbReference>
<dbReference type="InterPro" id="IPR036396">
    <property type="entry name" value="Cyt_P450_sf"/>
</dbReference>
<dbReference type="PANTHER" id="PTHR46206">
    <property type="entry name" value="CYTOCHROME P450"/>
    <property type="match status" value="1"/>
</dbReference>
<dbReference type="PANTHER" id="PTHR46206:SF1">
    <property type="entry name" value="P450, PUTATIVE (EUROFUNG)-RELATED"/>
    <property type="match status" value="1"/>
</dbReference>
<dbReference type="Pfam" id="PF00067">
    <property type="entry name" value="p450"/>
    <property type="match status" value="1"/>
</dbReference>
<dbReference type="PRINTS" id="PR00465">
    <property type="entry name" value="EP450IV"/>
</dbReference>
<dbReference type="SUPFAM" id="SSF48264">
    <property type="entry name" value="Cytochrome P450"/>
    <property type="match status" value="1"/>
</dbReference>
<dbReference type="PROSITE" id="PS00086">
    <property type="entry name" value="CYTOCHROME_P450"/>
    <property type="match status" value="1"/>
</dbReference>
<sequence length="565" mass="63221">MEVSNLNFALVLLSIAYAFGTAVMRTQKHSPSFLHSVPVVGLRKQAFSITRASLRQLFGGITTLLEGYSQYTQHDQPFAMYDLSSRQETLVPVKDVKWFAEQPDSQLSSHGVRQERHAVEHLHMGVDVPATMHFIERITGDRLTRNLDLLAQPMHEEIQRCIETEFGNDPEEWKEINVYDSVQDIVMPTMSRVFLGLPLCRDTKVVNALKRYVMALGLATIFIGSLPRLVKSVLAGLVKIPLAYYRRQTLAVLVPLIRRQLEHPAEGDSDSEQETGFLRSCAKISEKNAVGGIGNVVEPEIIAQWIMWLAFAGSSSTIIQATNLLLDLANCPKDMEVIQQLRQEAVSSLKSAEDWKDPQSFNKQVISDSAIRESLRFHPILIKGLTKEVVPSSGITLPNGTQMSKGSWVGIPVLGIHRDKRYYPDPETYDPFRFVPFRLNGELQAGTAWGSKLDAAKPTTTYLGFGYGRHACPGRWFATLMLKMILAEIVLHYEIEATAPPPQMRVIGDAALPPMSATIRPIALVKTFHLPSSAPKKIARDTKKPHSKFFSRQCPVSPQNWNLVE</sequence>
<keyword id="KW-0349">Heme</keyword>
<keyword id="KW-0408">Iron</keyword>
<keyword id="KW-0472">Membrane</keyword>
<keyword id="KW-0479">Metal-binding</keyword>
<keyword id="KW-0503">Monooxygenase</keyword>
<keyword id="KW-0560">Oxidoreductase</keyword>
<keyword id="KW-0812">Transmembrane</keyword>
<keyword id="KW-1133">Transmembrane helix</keyword>
<comment type="function">
    <text evidence="3 6">Cytochrome P450 monooxygenase; part of the gene cluster that mediates the biosynthesis of enfumafungin, a glycosylated fernene-type triterpenoid with potent antifungal activity, mediated by its interaction with beta-1,3-glucan synthase and the fungal cell wall (PubMed:30051576). The pathway begins with the terpene cyclase-glycosyl transferase fusion protein that most likely uses 2,3-oxidosqualene as substrate and catalyzes glycosylation immediately after cyclization (Probable). The fernene glycoside then could be processed by the desaturase efuI which catalyzes isomerization of a double bond established by efuA to form the core structure (Probable). The latter would then undergo a series of hydroxylations in unknown order at C-2, C-19, C-23 and C-25, which would be catalyzed by two of the three cytochrome P450 monooxygenases efuB, efuG or efuH (Probable). The hydroxy-group at C-25 becomes oxidized by the dehydrogenase efuE to enable a spontaneous, non-enzymatic hemiacetal formation with C-23 (Probable). After hydroxylation at C-2, acetylation by the acetyltransferase efuC takes place (Probable). The final steps in enfumafungin biosynthesis require expansion of the 5-membered ring by lactonization via a Baeyer-Villiger reaction mediated by one of the BGC's cytochrome P450 monooxygenases (efuB, efuG or efuH) followed by ring cleavage (Probable). This type of reaction would establish a double bond between C-20 and C-21 which could be reduced by the reductase efuL to form the final product (Probable).</text>
</comment>
<comment type="cofactor">
    <cofactor evidence="1">
        <name>heme</name>
        <dbReference type="ChEBI" id="CHEBI:30413"/>
    </cofactor>
</comment>
<comment type="pathway">
    <text evidence="6">Secondary metabolite biosynthesis; terpenoid biosynthesis.</text>
</comment>
<comment type="subcellular location">
    <subcellularLocation>
        <location evidence="2">Membrane</location>
        <topology evidence="2">Single-pass membrane protein</topology>
    </subcellularLocation>
</comment>
<comment type="similarity">
    <text evidence="5">Belongs to the cytochrome P450 family.</text>
</comment>
<organism>
    <name type="scientific">Hormonema carpetanum</name>
    <dbReference type="NCBI Taxonomy" id="284138"/>
    <lineage>
        <taxon>Eukaryota</taxon>
        <taxon>Fungi</taxon>
        <taxon>Dikarya</taxon>
        <taxon>Ascomycota</taxon>
        <taxon>Pezizomycotina</taxon>
        <taxon>Dothideomycetes</taxon>
        <taxon>Dothideomycetidae</taxon>
        <taxon>Dothideales</taxon>
        <taxon>Dothioraceae</taxon>
        <taxon>Hormonema</taxon>
    </lineage>
</organism>
<evidence type="ECO:0000250" key="1">
    <source>
        <dbReference type="UniProtKB" id="P04798"/>
    </source>
</evidence>
<evidence type="ECO:0000255" key="2"/>
<evidence type="ECO:0000269" key="3">
    <source>
    </source>
</evidence>
<evidence type="ECO:0000303" key="4">
    <source>
    </source>
</evidence>
<evidence type="ECO:0000305" key="5"/>
<evidence type="ECO:0000305" key="6">
    <source>
    </source>
</evidence>